<organism>
    <name type="scientific">Methanococcoides burtonii (strain DSM 6242 / NBRC 107633 / OCM 468 / ACE-M)</name>
    <dbReference type="NCBI Taxonomy" id="259564"/>
    <lineage>
        <taxon>Archaea</taxon>
        <taxon>Methanobacteriati</taxon>
        <taxon>Methanobacteriota</taxon>
        <taxon>Stenosarchaea group</taxon>
        <taxon>Methanomicrobia</taxon>
        <taxon>Methanosarcinales</taxon>
        <taxon>Methanosarcinaceae</taxon>
        <taxon>Methanococcoides</taxon>
    </lineage>
</organism>
<accession>Q12WH8</accession>
<dbReference type="EC" id="3.1.1.29" evidence="1"/>
<dbReference type="EMBL" id="CP000300">
    <property type="protein sequence ID" value="ABE52198.1"/>
    <property type="molecule type" value="Genomic_DNA"/>
</dbReference>
<dbReference type="SMR" id="Q12WH8"/>
<dbReference type="STRING" id="259564.Mbur_1277"/>
<dbReference type="GeneID" id="3998302"/>
<dbReference type="KEGG" id="mbu:Mbur_1277"/>
<dbReference type="HOGENOM" id="CLU_073661_2_2_2"/>
<dbReference type="OrthoDB" id="6075at2157"/>
<dbReference type="Proteomes" id="UP000001979">
    <property type="component" value="Chromosome"/>
</dbReference>
<dbReference type="GO" id="GO:0005829">
    <property type="term" value="C:cytosol"/>
    <property type="evidence" value="ECO:0007669"/>
    <property type="project" value="TreeGrafter"/>
</dbReference>
<dbReference type="GO" id="GO:0004045">
    <property type="term" value="F:peptidyl-tRNA hydrolase activity"/>
    <property type="evidence" value="ECO:0007669"/>
    <property type="project" value="UniProtKB-UniRule"/>
</dbReference>
<dbReference type="GO" id="GO:0006412">
    <property type="term" value="P:translation"/>
    <property type="evidence" value="ECO:0007669"/>
    <property type="project" value="UniProtKB-UniRule"/>
</dbReference>
<dbReference type="CDD" id="cd02430">
    <property type="entry name" value="PTH2"/>
    <property type="match status" value="1"/>
</dbReference>
<dbReference type="FunFam" id="3.40.1490.10:FF:000001">
    <property type="entry name" value="Peptidyl-tRNA hydrolase 2"/>
    <property type="match status" value="1"/>
</dbReference>
<dbReference type="Gene3D" id="3.40.1490.10">
    <property type="entry name" value="Bit1"/>
    <property type="match status" value="1"/>
</dbReference>
<dbReference type="HAMAP" id="MF_00628">
    <property type="entry name" value="Pept_tRNA_hydro_arch"/>
    <property type="match status" value="1"/>
</dbReference>
<dbReference type="InterPro" id="IPR023476">
    <property type="entry name" value="Pep_tRNA_hydro_II_dom_sf"/>
</dbReference>
<dbReference type="InterPro" id="IPR034759">
    <property type="entry name" value="Pept_tRNA_hydro_arch"/>
</dbReference>
<dbReference type="InterPro" id="IPR002833">
    <property type="entry name" value="PTH2"/>
</dbReference>
<dbReference type="NCBIfam" id="TIGR00283">
    <property type="entry name" value="arch_pth2"/>
    <property type="match status" value="1"/>
</dbReference>
<dbReference type="NCBIfam" id="NF003314">
    <property type="entry name" value="PRK04322.1"/>
    <property type="match status" value="1"/>
</dbReference>
<dbReference type="PANTHER" id="PTHR12649">
    <property type="entry name" value="PEPTIDYL-TRNA HYDROLASE 2"/>
    <property type="match status" value="1"/>
</dbReference>
<dbReference type="PANTHER" id="PTHR12649:SF11">
    <property type="entry name" value="PEPTIDYL-TRNA HYDROLASE 2, MITOCHONDRIAL"/>
    <property type="match status" value="1"/>
</dbReference>
<dbReference type="Pfam" id="PF01981">
    <property type="entry name" value="PTH2"/>
    <property type="match status" value="1"/>
</dbReference>
<dbReference type="SUPFAM" id="SSF102462">
    <property type="entry name" value="Peptidyl-tRNA hydrolase II"/>
    <property type="match status" value="1"/>
</dbReference>
<protein>
    <recommendedName>
        <fullName evidence="1">Peptidyl-tRNA hydrolase</fullName>
        <shortName evidence="1">PTH</shortName>
        <ecNumber evidence="1">3.1.1.29</ecNumber>
    </recommendedName>
</protein>
<feature type="chain" id="PRO_1000051677" description="Peptidyl-tRNA hydrolase">
    <location>
        <begin position="1"/>
        <end position="115"/>
    </location>
</feature>
<reference key="1">
    <citation type="journal article" date="2009" name="ISME J.">
        <title>The genome sequence of the psychrophilic archaeon, Methanococcoides burtonii: the role of genome evolution in cold adaptation.</title>
        <authorList>
            <person name="Allen M.A."/>
            <person name="Lauro F.M."/>
            <person name="Williams T.J."/>
            <person name="Burg D."/>
            <person name="Siddiqui K.S."/>
            <person name="De Francisci D."/>
            <person name="Chong K.W."/>
            <person name="Pilak O."/>
            <person name="Chew H.H."/>
            <person name="De Maere M.Z."/>
            <person name="Ting L."/>
            <person name="Katrib M."/>
            <person name="Ng C."/>
            <person name="Sowers K.R."/>
            <person name="Galperin M.Y."/>
            <person name="Anderson I.J."/>
            <person name="Ivanova N."/>
            <person name="Dalin E."/>
            <person name="Martinez M."/>
            <person name="Lapidus A."/>
            <person name="Hauser L."/>
            <person name="Land M."/>
            <person name="Thomas T."/>
            <person name="Cavicchioli R."/>
        </authorList>
    </citation>
    <scope>NUCLEOTIDE SEQUENCE [LARGE SCALE GENOMIC DNA]</scope>
    <source>
        <strain>DSM 6242 / NBRC 107633 / OCM 468 / ACE-M</strain>
    </source>
</reference>
<keyword id="KW-0963">Cytoplasm</keyword>
<keyword id="KW-0378">Hydrolase</keyword>
<gene>
    <name evidence="1" type="primary">pth</name>
    <name type="ordered locus">Mbur_1277</name>
</gene>
<sequence length="115" mass="12560">MVEYKQCIIIRDDLKLSKGKLAVQVAHAAVSAAEWASRSDLENWKEGGQKKVVLRVEKLQDLFELKEKARREGLSTALITDAGLTEIAPGTVTVLGIGPARADYIDKVTGNLKLV</sequence>
<name>PTH_METBU</name>
<comment type="function">
    <text evidence="1">The natural substrate for this enzyme may be peptidyl-tRNAs which drop off the ribosome during protein synthesis.</text>
</comment>
<comment type="catalytic activity">
    <reaction evidence="1">
        <text>an N-acyl-L-alpha-aminoacyl-tRNA + H2O = an N-acyl-L-amino acid + a tRNA + H(+)</text>
        <dbReference type="Rhea" id="RHEA:54448"/>
        <dbReference type="Rhea" id="RHEA-COMP:10123"/>
        <dbReference type="Rhea" id="RHEA-COMP:13883"/>
        <dbReference type="ChEBI" id="CHEBI:15377"/>
        <dbReference type="ChEBI" id="CHEBI:15378"/>
        <dbReference type="ChEBI" id="CHEBI:59874"/>
        <dbReference type="ChEBI" id="CHEBI:78442"/>
        <dbReference type="ChEBI" id="CHEBI:138191"/>
        <dbReference type="EC" id="3.1.1.29"/>
    </reaction>
</comment>
<comment type="subcellular location">
    <subcellularLocation>
        <location evidence="1">Cytoplasm</location>
    </subcellularLocation>
</comment>
<comment type="similarity">
    <text evidence="1">Belongs to the PTH2 family.</text>
</comment>
<evidence type="ECO:0000255" key="1">
    <source>
        <dbReference type="HAMAP-Rule" id="MF_00628"/>
    </source>
</evidence>
<proteinExistence type="inferred from homology"/>